<protein>
    <recommendedName>
        <fullName>Flagellar hook protein FlgE</fullName>
    </recommendedName>
</protein>
<reference key="1">
    <citation type="journal article" date="2001" name="Mol. Genet. Genomics">
        <title>Organization, expression, and function of Caulobacter crescentus genes needed for assembly and function of the flagellar hook.</title>
        <authorList>
            <person name="Mullin D.A."/>
            <person name="Ohta N."/>
            <person name="Mullin A.H."/>
            <person name="Newton A."/>
        </authorList>
    </citation>
    <scope>NUCLEOTIDE SEQUENCE [GENOMIC DNA]</scope>
    <source>
        <strain>ATCC 19089 / CIP 103742 / CB 15</strain>
    </source>
</reference>
<reference key="2">
    <citation type="journal article" date="2001" name="Proc. Natl. Acad. Sci. U.S.A.">
        <title>Complete genome sequence of Caulobacter crescentus.</title>
        <authorList>
            <person name="Nierman W.C."/>
            <person name="Feldblyum T.V."/>
            <person name="Laub M.T."/>
            <person name="Paulsen I.T."/>
            <person name="Nelson K.E."/>
            <person name="Eisen J.A."/>
            <person name="Heidelberg J.F."/>
            <person name="Alley M.R.K."/>
            <person name="Ohta N."/>
            <person name="Maddock J.R."/>
            <person name="Potocka I."/>
            <person name="Nelson W.C."/>
            <person name="Newton A."/>
            <person name="Stephens C."/>
            <person name="Phadke N.D."/>
            <person name="Ely B."/>
            <person name="DeBoy R.T."/>
            <person name="Dodson R.J."/>
            <person name="Durkin A.S."/>
            <person name="Gwinn M.L."/>
            <person name="Haft D.H."/>
            <person name="Kolonay J.F."/>
            <person name="Smit J."/>
            <person name="Craven M.B."/>
            <person name="Khouri H.M."/>
            <person name="Shetty J."/>
            <person name="Berry K.J."/>
            <person name="Utterback T.R."/>
            <person name="Tran K."/>
            <person name="Wolf A.M."/>
            <person name="Vamathevan J.J."/>
            <person name="Ermolaeva M.D."/>
            <person name="White O."/>
            <person name="Salzberg S.L."/>
            <person name="Venter J.C."/>
            <person name="Shapiro L."/>
            <person name="Fraser C.M."/>
        </authorList>
    </citation>
    <scope>NUCLEOTIDE SEQUENCE [LARGE SCALE GENOMIC DNA]</scope>
    <source>
        <strain>ATCC 19089 / CIP 103742 / CB 15</strain>
    </source>
</reference>
<reference key="3">
    <citation type="journal article" date="1985" name="J. Mol. Biol.">
        <title>Transcriptional regulation of a periodically controlled flagellar gene operon in Caulobacter crescentus.</title>
        <authorList>
            <person name="Ohta N."/>
            <person name="Chen L.S."/>
            <person name="Swanson E."/>
            <person name="Newton A."/>
        </authorList>
    </citation>
    <scope>NUCLEOTIDE SEQUENCE [GENOMIC DNA] OF 1-52</scope>
    <source>
        <strain>ATCC 19089 / CIP 103742 / CB 15</strain>
    </source>
</reference>
<proteinExistence type="evidence at protein level"/>
<evidence type="ECO:0000250" key="1"/>
<evidence type="ECO:0000305" key="2"/>
<evidence type="ECO:0007829" key="3">
    <source>
        <dbReference type="PDB" id="5AY6"/>
    </source>
</evidence>
<keyword id="KW-0002">3D-structure</keyword>
<keyword id="KW-0975">Bacterial flagellum</keyword>
<keyword id="KW-1185">Reference proteome</keyword>
<gene>
    <name type="primary">flgE</name>
    <name type="synonym">flaK</name>
    <name type="ordered locus">CC_0902</name>
</gene>
<sequence length="591" mass="61208">MSINSAMLAGVSGLIANSSALAAISDNIANVNTVGFKRSTSNFSTLVTSGNKNQTYSAGGVKAQTHQFISQQGLTQSTTSNLDISISGAGFFVTTEKPENLTATDTRSFTRAGSFQLDNLGYLRNDAGLYLQGWLADPVSGLITPDPSDLMQLASINVGSVGGTAEKTTRVGVNANLRSEQPVAAAVSYKVGTAGSPSKTNVVDSATNSHNYDVVYSSTGIANPVSGNNEYLVDIKENGVIVATGKVAYDAATNELVSSTIDYKGASPVTGSMTTTRINAAGTTVNLADLGIVNASGADDAEVVAGKLYDPSTWSMSDYAKDNSKGVKPDFEVQIPLSDSKGGQRTVTLSMLKGPGPNQWYAELRAKPGDLANNGNGQISTGIIEFTTDGKLKNTGSLFGTTSPTAITIKSSGYIAPTVTPPAVQPPTPPTWADALGIDEQEVQIDLASAAGGLTQYNSQSVVQSVNTNGTAFGNLTNIEIDEGGYVSAIFDNGVTRRIAQVAIATFSNPNGLKGVNGNAYRVTNESGTYSLKAPSQGGAGALAPSTLEASTVDLSQEFTGLITTQRAYSASSKIITTADQMLEELLNIKR</sequence>
<comment type="subcellular location">
    <subcellularLocation>
        <location evidence="1">Bacterial flagellum basal body</location>
    </subcellularLocation>
</comment>
<comment type="similarity">
    <text evidence="2">Belongs to the flagella basal body rod proteins family.</text>
</comment>
<dbReference type="EMBL" id="AF072135">
    <property type="protein sequence ID" value="AAC33329.1"/>
    <property type="molecule type" value="Genomic_DNA"/>
</dbReference>
<dbReference type="EMBL" id="AE005673">
    <property type="protein sequence ID" value="AAK22886.1"/>
    <property type="molecule type" value="Genomic_DNA"/>
</dbReference>
<dbReference type="EMBL" id="M28551">
    <property type="protein sequence ID" value="AAA23042.1"/>
    <property type="molecule type" value="Genomic_DNA"/>
</dbReference>
<dbReference type="PIR" id="B87361">
    <property type="entry name" value="B87361"/>
</dbReference>
<dbReference type="PIR" id="I40664">
    <property type="entry name" value="I40664"/>
</dbReference>
<dbReference type="RefSeq" id="NP_419718.1">
    <property type="nucleotide sequence ID" value="NC_002696.2"/>
</dbReference>
<dbReference type="RefSeq" id="WP_010918786.1">
    <property type="nucleotide sequence ID" value="NC_002696.2"/>
</dbReference>
<dbReference type="PDB" id="5AY6">
    <property type="method" value="X-ray"/>
    <property type="resolution" value="1.84 A"/>
    <property type="chains" value="A/B=165-470"/>
</dbReference>
<dbReference type="PDBsum" id="5AY6"/>
<dbReference type="SMR" id="P35806"/>
<dbReference type="STRING" id="190650.CC_0902"/>
<dbReference type="EnsemblBacteria" id="AAK22886">
    <property type="protein sequence ID" value="AAK22886"/>
    <property type="gene ID" value="CC_0902"/>
</dbReference>
<dbReference type="KEGG" id="ccr:CC_0902"/>
<dbReference type="PATRIC" id="fig|190650.5.peg.916"/>
<dbReference type="eggNOG" id="COG1749">
    <property type="taxonomic scope" value="Bacteria"/>
</dbReference>
<dbReference type="HOGENOM" id="CLU_013687_2_0_5"/>
<dbReference type="BioCyc" id="CAULO:CC0902-MONOMER"/>
<dbReference type="Proteomes" id="UP000001816">
    <property type="component" value="Chromosome"/>
</dbReference>
<dbReference type="GO" id="GO:0009425">
    <property type="term" value="C:bacterial-type flagellum basal body"/>
    <property type="evidence" value="ECO:0007669"/>
    <property type="project" value="UniProtKB-SubCell"/>
</dbReference>
<dbReference type="GO" id="GO:0009424">
    <property type="term" value="C:bacterial-type flagellum hook"/>
    <property type="evidence" value="ECO:0007669"/>
    <property type="project" value="TreeGrafter"/>
</dbReference>
<dbReference type="GO" id="GO:0005829">
    <property type="term" value="C:cytosol"/>
    <property type="evidence" value="ECO:0007669"/>
    <property type="project" value="TreeGrafter"/>
</dbReference>
<dbReference type="GO" id="GO:0071978">
    <property type="term" value="P:bacterial-type flagellum-dependent swarming motility"/>
    <property type="evidence" value="ECO:0007669"/>
    <property type="project" value="TreeGrafter"/>
</dbReference>
<dbReference type="InterPro" id="IPR001444">
    <property type="entry name" value="Flag_bb_rod_N"/>
</dbReference>
<dbReference type="InterPro" id="IPR053592">
    <property type="entry name" value="Flagellar_basal_body_rod"/>
</dbReference>
<dbReference type="InterPro" id="IPR019776">
    <property type="entry name" value="Flagellar_basal_body_rod_CS"/>
</dbReference>
<dbReference type="InterPro" id="IPR020013">
    <property type="entry name" value="Flagellar_FlgE/F/G"/>
</dbReference>
<dbReference type="InterPro" id="IPR010930">
    <property type="entry name" value="Flg_bb/hook_C_dom"/>
</dbReference>
<dbReference type="InterPro" id="IPR037925">
    <property type="entry name" value="FlgE/F/G-like"/>
</dbReference>
<dbReference type="InterPro" id="IPR011491">
    <property type="entry name" value="FlgE_D2"/>
</dbReference>
<dbReference type="InterPro" id="IPR055069">
    <property type="entry name" value="FlgE_third"/>
</dbReference>
<dbReference type="InterPro" id="IPR053967">
    <property type="entry name" value="LlgE_F_G-like_D1"/>
</dbReference>
<dbReference type="NCBIfam" id="NF040922">
    <property type="entry name" value="flgE_Caulobact"/>
    <property type="match status" value="1"/>
</dbReference>
<dbReference type="NCBIfam" id="TIGR03506">
    <property type="entry name" value="FlgEFG_subfam"/>
    <property type="match status" value="2"/>
</dbReference>
<dbReference type="PANTHER" id="PTHR30435:SF1">
    <property type="entry name" value="FLAGELLAR HOOK PROTEIN FLGE"/>
    <property type="match status" value="1"/>
</dbReference>
<dbReference type="PANTHER" id="PTHR30435">
    <property type="entry name" value="FLAGELLAR PROTEIN"/>
    <property type="match status" value="1"/>
</dbReference>
<dbReference type="Pfam" id="PF00460">
    <property type="entry name" value="Flg_bb_rod"/>
    <property type="match status" value="1"/>
</dbReference>
<dbReference type="Pfam" id="PF06429">
    <property type="entry name" value="Flg_bbr_C"/>
    <property type="match status" value="1"/>
</dbReference>
<dbReference type="Pfam" id="PF22367">
    <property type="entry name" value="FlgE_3rd"/>
    <property type="match status" value="1"/>
</dbReference>
<dbReference type="Pfam" id="PF07559">
    <property type="entry name" value="FlgE_D2"/>
    <property type="match status" value="1"/>
</dbReference>
<dbReference type="Pfam" id="PF22692">
    <property type="entry name" value="LlgE_F_G_D1"/>
    <property type="match status" value="1"/>
</dbReference>
<dbReference type="SUPFAM" id="SSF117143">
    <property type="entry name" value="Flagellar hook protein flgE"/>
    <property type="match status" value="2"/>
</dbReference>
<dbReference type="PROSITE" id="PS00588">
    <property type="entry name" value="FLAGELLA_BB_ROD"/>
    <property type="match status" value="1"/>
</dbReference>
<accession>P35806</accession>
<feature type="chain" id="PRO_0000180824" description="Flagellar hook protein FlgE">
    <location>
        <begin position="1"/>
        <end position="591"/>
    </location>
</feature>
<feature type="strand" evidence="3">
    <location>
        <begin position="170"/>
        <end position="176"/>
    </location>
</feature>
<feature type="turn" evidence="3">
    <location>
        <begin position="185"/>
        <end position="187"/>
    </location>
</feature>
<feature type="strand" evidence="3">
    <location>
        <begin position="188"/>
        <end position="190"/>
    </location>
</feature>
<feature type="strand" evidence="3">
    <location>
        <begin position="198"/>
        <end position="203"/>
    </location>
</feature>
<feature type="strand" evidence="3">
    <location>
        <begin position="209"/>
        <end position="217"/>
    </location>
</feature>
<feature type="strand" evidence="3">
    <location>
        <begin position="228"/>
        <end position="237"/>
    </location>
</feature>
<feature type="strand" evidence="3">
    <location>
        <begin position="240"/>
        <end position="250"/>
    </location>
</feature>
<feature type="turn" evidence="3">
    <location>
        <begin position="251"/>
        <end position="253"/>
    </location>
</feature>
<feature type="strand" evidence="3">
    <location>
        <begin position="256"/>
        <end position="259"/>
    </location>
</feature>
<feature type="strand" evidence="3">
    <location>
        <begin position="273"/>
        <end position="279"/>
    </location>
</feature>
<feature type="strand" evidence="3">
    <location>
        <begin position="284"/>
        <end position="286"/>
    </location>
</feature>
<feature type="turn" evidence="3">
    <location>
        <begin position="287"/>
        <end position="291"/>
    </location>
</feature>
<feature type="helix" evidence="3">
    <location>
        <begin position="301"/>
        <end position="304"/>
    </location>
</feature>
<feature type="turn" evidence="3">
    <location>
        <begin position="311"/>
        <end position="313"/>
    </location>
</feature>
<feature type="helix" evidence="3">
    <location>
        <begin position="316"/>
        <end position="321"/>
    </location>
</feature>
<feature type="strand" evidence="3">
    <location>
        <begin position="330"/>
        <end position="338"/>
    </location>
</feature>
<feature type="strand" evidence="3">
    <location>
        <begin position="344"/>
        <end position="353"/>
    </location>
</feature>
<feature type="strand" evidence="3">
    <location>
        <begin position="359"/>
        <end position="366"/>
    </location>
</feature>
<feature type="strand" evidence="3">
    <location>
        <begin position="370"/>
        <end position="373"/>
    </location>
</feature>
<feature type="strand" evidence="3">
    <location>
        <begin position="378"/>
        <end position="386"/>
    </location>
</feature>
<feature type="strand" evidence="3">
    <location>
        <begin position="392"/>
        <end position="394"/>
    </location>
</feature>
<feature type="turn" evidence="3">
    <location>
        <begin position="396"/>
        <end position="401"/>
    </location>
</feature>
<feature type="strand" evidence="3">
    <location>
        <begin position="406"/>
        <end position="410"/>
    </location>
</feature>
<feature type="helix" evidence="3">
    <location>
        <begin position="434"/>
        <end position="436"/>
    </location>
</feature>
<feature type="strand" evidence="3">
    <location>
        <begin position="441"/>
        <end position="447"/>
    </location>
</feature>
<feature type="strand" evidence="3">
    <location>
        <begin position="450"/>
        <end position="452"/>
    </location>
</feature>
<feature type="strand" evidence="3">
    <location>
        <begin position="462"/>
        <end position="468"/>
    </location>
</feature>
<organism>
    <name type="scientific">Caulobacter vibrioides (strain ATCC 19089 / CIP 103742 / CB 15)</name>
    <name type="common">Caulobacter crescentus</name>
    <dbReference type="NCBI Taxonomy" id="190650"/>
    <lineage>
        <taxon>Bacteria</taxon>
        <taxon>Pseudomonadati</taxon>
        <taxon>Pseudomonadota</taxon>
        <taxon>Alphaproteobacteria</taxon>
        <taxon>Caulobacterales</taxon>
        <taxon>Caulobacteraceae</taxon>
        <taxon>Caulobacter</taxon>
    </lineage>
</organism>
<name>FLGE_CAUVC</name>